<dbReference type="EMBL" id="AM180355">
    <property type="protein sequence ID" value="CAJ68272.1"/>
    <property type="molecule type" value="Genomic_DNA"/>
</dbReference>
<dbReference type="RefSeq" id="WP_003438532.1">
    <property type="nucleotide sequence ID" value="NZ_JAUPES010000036.1"/>
</dbReference>
<dbReference type="RefSeq" id="YP_001087909.1">
    <property type="nucleotide sequence ID" value="NC_009089.1"/>
</dbReference>
<dbReference type="SMR" id="Q18BS8"/>
<dbReference type="STRING" id="272563.CD630_14090"/>
<dbReference type="EnsemblBacteria" id="CAJ68272">
    <property type="protein sequence ID" value="CAJ68272"/>
    <property type="gene ID" value="CD630_14090"/>
</dbReference>
<dbReference type="KEGG" id="cdf:CD630_14090"/>
<dbReference type="KEGG" id="pdc:CDIF630_01570"/>
<dbReference type="PATRIC" id="fig|272563.120.peg.1476"/>
<dbReference type="eggNOG" id="COG1058">
    <property type="taxonomic scope" value="Bacteria"/>
</dbReference>
<dbReference type="eggNOG" id="COG1546">
    <property type="taxonomic scope" value="Bacteria"/>
</dbReference>
<dbReference type="OrthoDB" id="9801454at2"/>
<dbReference type="PhylomeDB" id="Q18BS8"/>
<dbReference type="BioCyc" id="PDIF272563:G12WB-1547-MONOMER"/>
<dbReference type="Proteomes" id="UP000001978">
    <property type="component" value="Chromosome"/>
</dbReference>
<dbReference type="CDD" id="cd00885">
    <property type="entry name" value="cinA"/>
    <property type="match status" value="1"/>
</dbReference>
<dbReference type="Gene3D" id="3.30.70.2860">
    <property type="match status" value="1"/>
</dbReference>
<dbReference type="Gene3D" id="3.90.950.20">
    <property type="entry name" value="CinA-like"/>
    <property type="match status" value="1"/>
</dbReference>
<dbReference type="Gene3D" id="3.40.980.10">
    <property type="entry name" value="MoaB/Mog-like domain"/>
    <property type="match status" value="1"/>
</dbReference>
<dbReference type="HAMAP" id="MF_00226_B">
    <property type="entry name" value="CinA_B"/>
    <property type="match status" value="1"/>
</dbReference>
<dbReference type="InterPro" id="IPR050101">
    <property type="entry name" value="CinA"/>
</dbReference>
<dbReference type="InterPro" id="IPR036653">
    <property type="entry name" value="CinA-like_C"/>
</dbReference>
<dbReference type="InterPro" id="IPR008136">
    <property type="entry name" value="CinA_C"/>
</dbReference>
<dbReference type="InterPro" id="IPR041424">
    <property type="entry name" value="CinA_KH"/>
</dbReference>
<dbReference type="InterPro" id="IPR008135">
    <property type="entry name" value="Competence-induced_CinA"/>
</dbReference>
<dbReference type="InterPro" id="IPR036425">
    <property type="entry name" value="MoaB/Mog-like_dom_sf"/>
</dbReference>
<dbReference type="InterPro" id="IPR001453">
    <property type="entry name" value="MoaB/Mog_dom"/>
</dbReference>
<dbReference type="NCBIfam" id="TIGR00200">
    <property type="entry name" value="cinA_nterm"/>
    <property type="match status" value="1"/>
</dbReference>
<dbReference type="NCBIfam" id="TIGR00177">
    <property type="entry name" value="molyb_syn"/>
    <property type="match status" value="1"/>
</dbReference>
<dbReference type="NCBIfam" id="TIGR00199">
    <property type="entry name" value="PncC_domain"/>
    <property type="match status" value="1"/>
</dbReference>
<dbReference type="NCBIfam" id="NF001813">
    <property type="entry name" value="PRK00549.1"/>
    <property type="match status" value="1"/>
</dbReference>
<dbReference type="PANTHER" id="PTHR13939">
    <property type="entry name" value="NICOTINAMIDE-NUCLEOTIDE AMIDOHYDROLASE PNCC"/>
    <property type="match status" value="1"/>
</dbReference>
<dbReference type="PANTHER" id="PTHR13939:SF0">
    <property type="entry name" value="NMN AMIDOHYDROLASE-LIKE PROTEIN YFAY"/>
    <property type="match status" value="1"/>
</dbReference>
<dbReference type="Pfam" id="PF02464">
    <property type="entry name" value="CinA"/>
    <property type="match status" value="1"/>
</dbReference>
<dbReference type="Pfam" id="PF18146">
    <property type="entry name" value="CinA_KH"/>
    <property type="match status" value="1"/>
</dbReference>
<dbReference type="Pfam" id="PF00994">
    <property type="entry name" value="MoCF_biosynth"/>
    <property type="match status" value="1"/>
</dbReference>
<dbReference type="PIRSF" id="PIRSF006728">
    <property type="entry name" value="CinA"/>
    <property type="match status" value="1"/>
</dbReference>
<dbReference type="SMART" id="SM00852">
    <property type="entry name" value="MoCF_biosynth"/>
    <property type="match status" value="1"/>
</dbReference>
<dbReference type="SUPFAM" id="SSF142433">
    <property type="entry name" value="CinA-like"/>
    <property type="match status" value="1"/>
</dbReference>
<dbReference type="SUPFAM" id="SSF53218">
    <property type="entry name" value="Molybdenum cofactor biosynthesis proteins"/>
    <property type="match status" value="1"/>
</dbReference>
<reference key="1">
    <citation type="journal article" date="2006" name="Nat. Genet.">
        <title>The multidrug-resistant human pathogen Clostridium difficile has a highly mobile, mosaic genome.</title>
        <authorList>
            <person name="Sebaihia M."/>
            <person name="Wren B.W."/>
            <person name="Mullany P."/>
            <person name="Fairweather N.F."/>
            <person name="Minton N."/>
            <person name="Stabler R."/>
            <person name="Thomson N.R."/>
            <person name="Roberts A.P."/>
            <person name="Cerdeno-Tarraga A.M."/>
            <person name="Wang H."/>
            <person name="Holden M.T.G."/>
            <person name="Wright A."/>
            <person name="Churcher C."/>
            <person name="Quail M.A."/>
            <person name="Baker S."/>
            <person name="Bason N."/>
            <person name="Brooks K."/>
            <person name="Chillingworth T."/>
            <person name="Cronin A."/>
            <person name="Davis P."/>
            <person name="Dowd L."/>
            <person name="Fraser A."/>
            <person name="Feltwell T."/>
            <person name="Hance Z."/>
            <person name="Holroyd S."/>
            <person name="Jagels K."/>
            <person name="Moule S."/>
            <person name="Mungall K."/>
            <person name="Price C."/>
            <person name="Rabbinowitsch E."/>
            <person name="Sharp S."/>
            <person name="Simmonds M."/>
            <person name="Stevens K."/>
            <person name="Unwin L."/>
            <person name="Whithead S."/>
            <person name="Dupuy B."/>
            <person name="Dougan G."/>
            <person name="Barrell B."/>
            <person name="Parkhill J."/>
        </authorList>
    </citation>
    <scope>NUCLEOTIDE SEQUENCE [LARGE SCALE GENOMIC DNA]</scope>
    <source>
        <strain>630</strain>
    </source>
</reference>
<proteinExistence type="inferred from homology"/>
<gene>
    <name evidence="1" type="primary">cinA</name>
    <name type="ordered locus">CD630_14090</name>
</gene>
<comment type="similarity">
    <text evidence="1">Belongs to the CinA family.</text>
</comment>
<accession>Q18BS8</accession>
<feature type="chain" id="PRO_1000058699" description="Putative competence-damage inducible protein">
    <location>
        <begin position="1"/>
        <end position="418"/>
    </location>
</feature>
<evidence type="ECO:0000255" key="1">
    <source>
        <dbReference type="HAMAP-Rule" id="MF_00226"/>
    </source>
</evidence>
<organism>
    <name type="scientific">Clostridioides difficile (strain 630)</name>
    <name type="common">Peptoclostridium difficile</name>
    <dbReference type="NCBI Taxonomy" id="272563"/>
    <lineage>
        <taxon>Bacteria</taxon>
        <taxon>Bacillati</taxon>
        <taxon>Bacillota</taxon>
        <taxon>Clostridia</taxon>
        <taxon>Peptostreptococcales</taxon>
        <taxon>Peptostreptococcaceae</taxon>
        <taxon>Clostridioides</taxon>
    </lineage>
</organism>
<protein>
    <recommendedName>
        <fullName evidence="1">Putative competence-damage inducible protein</fullName>
    </recommendedName>
</protein>
<keyword id="KW-1185">Reference proteome</keyword>
<name>CINA_CLOD6</name>
<sequence length="418" mass="45902">MKAEIISVGTEILLGDIVNTNSQFLAKELASLGIEVYHQSTVGDNKQRLLECFDESLKRSDFVITTGGLGPTGDDMTKETAAEYFGQKLELHKPSLEVLESFFVKTGKKMAENNMKQVYFPKDAIVLKNNNGTAPGAILKKDGKFIIVLPGPPREMKAMFNESVKPYLQQFTNEMLVSKTLRLYGIGESNLELEILDIINEQTNPTVALYAKELEVTIRITAKAENEREAFKLIKPVEEKIKSRVGKYVYTEGDISISEGETALEDAVSKLLVEKNLTIAVAESCTGGLVSSSLINYPGISSVFLEGCVTYSNDSKMKRLGVKRETLEEFGAVSEQTAIEMAEGVAKGLKANIGISTTGVAGPGGGTKEKPVGLVYTAIYINGKTIVKKNIFNGDRRKIRLRATRDLLNELRIQLEKL</sequence>